<accession>P48861</accession>
<dbReference type="EC" id="4.1.1.28"/>
<dbReference type="EMBL" id="U03909">
    <property type="protein sequence ID" value="AAC46604.1"/>
    <property type="molecule type" value="mRNA"/>
</dbReference>
<dbReference type="SMR" id="P48861"/>
<dbReference type="EnsemblMetazoa" id="XM_037441795.1">
    <property type="protein sequence ID" value="XP_037297692.1"/>
    <property type="gene ID" value="LOC115449403"/>
</dbReference>
<dbReference type="OrthoDB" id="639767at2759"/>
<dbReference type="BRENDA" id="4.1.1.28">
    <property type="organism ID" value="3173"/>
</dbReference>
<dbReference type="GO" id="GO:0005737">
    <property type="term" value="C:cytoplasm"/>
    <property type="evidence" value="ECO:0007669"/>
    <property type="project" value="TreeGrafter"/>
</dbReference>
<dbReference type="GO" id="GO:0036467">
    <property type="term" value="F:5-hydroxy-L-tryptophan decarboxylase activity"/>
    <property type="evidence" value="ECO:0007669"/>
    <property type="project" value="RHEA"/>
</dbReference>
<dbReference type="GO" id="GO:0036468">
    <property type="term" value="F:L-dopa decarboxylase activity"/>
    <property type="evidence" value="ECO:0007669"/>
    <property type="project" value="RHEA"/>
</dbReference>
<dbReference type="GO" id="GO:0030170">
    <property type="term" value="F:pyridoxal phosphate binding"/>
    <property type="evidence" value="ECO:0007669"/>
    <property type="project" value="InterPro"/>
</dbReference>
<dbReference type="GO" id="GO:0006520">
    <property type="term" value="P:amino acid metabolic process"/>
    <property type="evidence" value="ECO:0007669"/>
    <property type="project" value="InterPro"/>
</dbReference>
<dbReference type="GO" id="GO:0019752">
    <property type="term" value="P:carboxylic acid metabolic process"/>
    <property type="evidence" value="ECO:0007669"/>
    <property type="project" value="InterPro"/>
</dbReference>
<dbReference type="GO" id="GO:0042423">
    <property type="term" value="P:catecholamine biosynthetic process"/>
    <property type="evidence" value="ECO:0007669"/>
    <property type="project" value="UniProtKB-KW"/>
</dbReference>
<dbReference type="GO" id="GO:0042427">
    <property type="term" value="P:serotonin biosynthetic process"/>
    <property type="evidence" value="ECO:0007669"/>
    <property type="project" value="TreeGrafter"/>
</dbReference>
<dbReference type="CDD" id="cd06450">
    <property type="entry name" value="DOPA_deC_like"/>
    <property type="match status" value="1"/>
</dbReference>
<dbReference type="FunFam" id="1.20.1340.10:FF:000001">
    <property type="entry name" value="Histidine decarboxylase"/>
    <property type="match status" value="1"/>
</dbReference>
<dbReference type="FunFam" id="3.40.640.10:FF:000025">
    <property type="entry name" value="Histidine decarboxylase"/>
    <property type="match status" value="1"/>
</dbReference>
<dbReference type="Gene3D" id="3.90.1150.10">
    <property type="entry name" value="Aspartate Aminotransferase, domain 1"/>
    <property type="match status" value="1"/>
</dbReference>
<dbReference type="Gene3D" id="1.20.1340.10">
    <property type="entry name" value="dopa decarboxylase, N-terminal domain"/>
    <property type="match status" value="1"/>
</dbReference>
<dbReference type="Gene3D" id="3.40.640.10">
    <property type="entry name" value="Type I PLP-dependent aspartate aminotransferase-like (Major domain)"/>
    <property type="match status" value="1"/>
</dbReference>
<dbReference type="InterPro" id="IPR010977">
    <property type="entry name" value="Aromatic_deC"/>
</dbReference>
<dbReference type="InterPro" id="IPR002129">
    <property type="entry name" value="PyrdxlP-dep_de-COase"/>
</dbReference>
<dbReference type="InterPro" id="IPR015424">
    <property type="entry name" value="PyrdxlP-dep_Trfase"/>
</dbReference>
<dbReference type="InterPro" id="IPR015421">
    <property type="entry name" value="PyrdxlP-dep_Trfase_major"/>
</dbReference>
<dbReference type="InterPro" id="IPR015422">
    <property type="entry name" value="PyrdxlP-dep_Trfase_small"/>
</dbReference>
<dbReference type="InterPro" id="IPR021115">
    <property type="entry name" value="Pyridoxal-P_BS"/>
</dbReference>
<dbReference type="PANTHER" id="PTHR11999:SF167">
    <property type="entry name" value="AROMATIC-L-AMINO-ACID DECARBOXYLASE"/>
    <property type="match status" value="1"/>
</dbReference>
<dbReference type="PANTHER" id="PTHR11999">
    <property type="entry name" value="GROUP II PYRIDOXAL-5-PHOSPHATE DECARBOXYLASE"/>
    <property type="match status" value="1"/>
</dbReference>
<dbReference type="Pfam" id="PF00282">
    <property type="entry name" value="Pyridoxal_deC"/>
    <property type="match status" value="1"/>
</dbReference>
<dbReference type="PRINTS" id="PR00800">
    <property type="entry name" value="YHDCRBOXLASE"/>
</dbReference>
<dbReference type="SUPFAM" id="SSF53383">
    <property type="entry name" value="PLP-dependent transferases"/>
    <property type="match status" value="1"/>
</dbReference>
<dbReference type="PROSITE" id="PS00392">
    <property type="entry name" value="DDC_GAD_HDC_YDC"/>
    <property type="match status" value="1"/>
</dbReference>
<gene>
    <name type="primary">Ddc</name>
</gene>
<keyword id="KW-0127">Catecholamine biosynthesis</keyword>
<keyword id="KW-0210">Decarboxylase</keyword>
<keyword id="KW-0456">Lyase</keyword>
<keyword id="KW-0663">Pyridoxal phosphate</keyword>
<feature type="chain" id="PRO_0000146948" description="Aromatic-L-amino-acid decarboxylase">
    <location>
        <begin position="1"/>
        <end position="508"/>
    </location>
</feature>
<feature type="binding site" evidence="1">
    <location>
        <position position="82"/>
    </location>
    <ligand>
        <name>substrate</name>
    </ligand>
</feature>
<feature type="binding site" evidence="1">
    <location>
        <position position="148"/>
    </location>
    <ligand>
        <name>pyridoxal 5'-phosphate</name>
        <dbReference type="ChEBI" id="CHEBI:597326"/>
    </ligand>
</feature>
<feature type="binding site" evidence="1">
    <location>
        <position position="149"/>
    </location>
    <ligand>
        <name>pyridoxal 5'-phosphate</name>
        <dbReference type="ChEBI" id="CHEBI:597326"/>
    </ligand>
</feature>
<feature type="binding site" evidence="1">
    <location>
        <position position="192"/>
    </location>
    <ligand>
        <name>substrate</name>
    </ligand>
</feature>
<feature type="binding site" evidence="1">
    <location>
        <position position="246"/>
    </location>
    <ligand>
        <name>pyridoxal 5'-phosphate</name>
        <dbReference type="ChEBI" id="CHEBI:597326"/>
    </ligand>
</feature>
<feature type="binding site" evidence="1">
    <location>
        <position position="300"/>
    </location>
    <ligand>
        <name>pyridoxal 5'-phosphate</name>
        <dbReference type="ChEBI" id="CHEBI:597326"/>
    </ligand>
</feature>
<feature type="modified residue" description="N6-(pyridoxal phosphate)lysine" evidence="1">
    <location>
        <position position="303"/>
    </location>
</feature>
<comment type="function">
    <text>Catalyzes the decarboxylation of L-3,4-dihydroxyphenylalanine (DOPA) to dopamine, L-5-hydroxytryptophan to serotonin and L-tryptophan to tryptamine.</text>
</comment>
<comment type="catalytic activity">
    <reaction>
        <text>L-dopa + H(+) = dopamine + CO2</text>
        <dbReference type="Rhea" id="RHEA:12272"/>
        <dbReference type="ChEBI" id="CHEBI:15378"/>
        <dbReference type="ChEBI" id="CHEBI:16526"/>
        <dbReference type="ChEBI" id="CHEBI:57504"/>
        <dbReference type="ChEBI" id="CHEBI:59905"/>
        <dbReference type="EC" id="4.1.1.28"/>
    </reaction>
</comment>
<comment type="catalytic activity">
    <reaction>
        <text>5-hydroxy-L-tryptophan + H(+) = serotonin + CO2</text>
        <dbReference type="Rhea" id="RHEA:18533"/>
        <dbReference type="ChEBI" id="CHEBI:15378"/>
        <dbReference type="ChEBI" id="CHEBI:16526"/>
        <dbReference type="ChEBI" id="CHEBI:58266"/>
        <dbReference type="ChEBI" id="CHEBI:350546"/>
        <dbReference type="EC" id="4.1.1.28"/>
    </reaction>
</comment>
<comment type="cofactor">
    <cofactor>
        <name>pyridoxal 5'-phosphate</name>
        <dbReference type="ChEBI" id="CHEBI:597326"/>
    </cofactor>
</comment>
<comment type="subunit">
    <text evidence="1">Homodimer.</text>
</comment>
<comment type="similarity">
    <text evidence="2">Belongs to the group II decarboxylase family.</text>
</comment>
<name>DDC_MANSE</name>
<sequence>MNPGDFKDFAKAMTDYITEYLENIRDRQVVPSVKPGYLRPLVPEQAPQQAEPWTAVMADIERVVMSGVTHWQSPRFHAYFPTANSYPSIVADMLSGAIACIGFTWIASPACTELEVVMLDWLGQMLGLPDQFLARSGGEGGGVIQGTASEATFVALLGAKSRMMHRVKEQHPEWTETDILGKLVGYCNQQAHSSVERAGLLGGVKLRSLKPDSKRRLRGDTLREAIDEDIRNGLIPFYVVATLGTTSSCAFDALDEIGDVCNASDIWLHVDAAYAGSAFICPEYRHFMKGVEKADSFNFNPHKWMLVNFDCSAMWLKQPRWIVDAFNVDPLYLKHEQQGSAPDYRHWQIPLGRRFRSLKLWFVLRLYGVENLQKYIRKQIGFAHLFERLLTSDERFELFEEVTMGLVCFRLKGSNEINEELLRRINGRGKIHLVPSKVDDVYFLRLAICSRFTEESDMHVSWEEIKDRLMMFLKSKGAVLIKIICSTTRRTKNILTYIKQNIFRDVGL</sequence>
<proteinExistence type="evidence at transcript level"/>
<evidence type="ECO:0000250" key="1"/>
<evidence type="ECO:0000305" key="2"/>
<reference key="1">
    <citation type="journal article" date="1995" name="Dev. Biol.">
        <title>Characterization of the dopa decarboxylase gene of Manduca sexta and its suppression by 20-hydroxyecdysone.</title>
        <authorList>
            <person name="Hiruma K."/>
            <person name="Carter M.S."/>
            <person name="Riddiford L.M."/>
        </authorList>
    </citation>
    <scope>NUCLEOTIDE SEQUENCE [MRNA]</scope>
    <source>
        <tissue>Epidermis</tissue>
    </source>
</reference>
<protein>
    <recommendedName>
        <fullName>Aromatic-L-amino-acid decarboxylase</fullName>
        <shortName>AADC</shortName>
        <ecNumber>4.1.1.28</ecNumber>
    </recommendedName>
    <alternativeName>
        <fullName>DOPA decarboxylase</fullName>
        <shortName>DDC</shortName>
    </alternativeName>
</protein>
<organism>
    <name type="scientific">Manduca sexta</name>
    <name type="common">Tobacco hawkmoth</name>
    <name type="synonym">Tobacco hornworm</name>
    <dbReference type="NCBI Taxonomy" id="7130"/>
    <lineage>
        <taxon>Eukaryota</taxon>
        <taxon>Metazoa</taxon>
        <taxon>Ecdysozoa</taxon>
        <taxon>Arthropoda</taxon>
        <taxon>Hexapoda</taxon>
        <taxon>Insecta</taxon>
        <taxon>Pterygota</taxon>
        <taxon>Neoptera</taxon>
        <taxon>Endopterygota</taxon>
        <taxon>Lepidoptera</taxon>
        <taxon>Glossata</taxon>
        <taxon>Ditrysia</taxon>
        <taxon>Bombycoidea</taxon>
        <taxon>Sphingidae</taxon>
        <taxon>Sphinginae</taxon>
        <taxon>Sphingini</taxon>
        <taxon>Manduca</taxon>
    </lineage>
</organism>